<comment type="function">
    <text evidence="1">Participates in both transcription termination and antitermination.</text>
</comment>
<comment type="subunit">
    <text evidence="1">Monomer. Binds directly to the core enzyme of the DNA-dependent RNA polymerase and to nascent RNA.</text>
</comment>
<comment type="subcellular location">
    <subcellularLocation>
        <location evidence="1">Cytoplasm</location>
    </subcellularLocation>
</comment>
<comment type="similarity">
    <text evidence="1">Belongs to the NusA family.</text>
</comment>
<dbReference type="EMBL" id="BA000003">
    <property type="protein sequence ID" value="BAB13082.1"/>
    <property type="molecule type" value="Genomic_DNA"/>
</dbReference>
<dbReference type="RefSeq" id="NP_240196.1">
    <property type="nucleotide sequence ID" value="NC_002528.1"/>
</dbReference>
<dbReference type="RefSeq" id="WP_009874336.1">
    <property type="nucleotide sequence ID" value="NC_002528.1"/>
</dbReference>
<dbReference type="SMR" id="P57459"/>
<dbReference type="STRING" id="563178.BUAP5A_371"/>
<dbReference type="EnsemblBacteria" id="BAB13082">
    <property type="protein sequence ID" value="BAB13082"/>
    <property type="gene ID" value="BAB13082"/>
</dbReference>
<dbReference type="KEGG" id="buc:BU378"/>
<dbReference type="PATRIC" id="fig|107806.10.peg.392"/>
<dbReference type="eggNOG" id="COG0195">
    <property type="taxonomic scope" value="Bacteria"/>
</dbReference>
<dbReference type="HOGENOM" id="CLU_029242_0_0_6"/>
<dbReference type="Proteomes" id="UP000001806">
    <property type="component" value="Chromosome"/>
</dbReference>
<dbReference type="GO" id="GO:0005829">
    <property type="term" value="C:cytosol"/>
    <property type="evidence" value="ECO:0007669"/>
    <property type="project" value="TreeGrafter"/>
</dbReference>
<dbReference type="GO" id="GO:0003700">
    <property type="term" value="F:DNA-binding transcription factor activity"/>
    <property type="evidence" value="ECO:0007669"/>
    <property type="project" value="InterPro"/>
</dbReference>
<dbReference type="GO" id="GO:0000166">
    <property type="term" value="F:nucleotide binding"/>
    <property type="evidence" value="ECO:0007669"/>
    <property type="project" value="InterPro"/>
</dbReference>
<dbReference type="GO" id="GO:0003723">
    <property type="term" value="F:RNA binding"/>
    <property type="evidence" value="ECO:0007669"/>
    <property type="project" value="UniProtKB-UniRule"/>
</dbReference>
<dbReference type="GO" id="GO:0006353">
    <property type="term" value="P:DNA-templated transcription termination"/>
    <property type="evidence" value="ECO:0007669"/>
    <property type="project" value="UniProtKB-UniRule"/>
</dbReference>
<dbReference type="GO" id="GO:0031564">
    <property type="term" value="P:transcription antitermination"/>
    <property type="evidence" value="ECO:0007669"/>
    <property type="project" value="UniProtKB-UniRule"/>
</dbReference>
<dbReference type="CDD" id="cd02134">
    <property type="entry name" value="KH-II_NusA_rpt1"/>
    <property type="match status" value="1"/>
</dbReference>
<dbReference type="CDD" id="cd22529">
    <property type="entry name" value="KH-II_NusA_rpt2"/>
    <property type="match status" value="1"/>
</dbReference>
<dbReference type="CDD" id="cd04455">
    <property type="entry name" value="S1_NusA"/>
    <property type="match status" value="1"/>
</dbReference>
<dbReference type="FunFam" id="3.30.1480.10:FF:000001">
    <property type="entry name" value="Transcription termination/antitermination protein NusA"/>
    <property type="match status" value="1"/>
</dbReference>
<dbReference type="FunFam" id="3.30.300.20:FF:000002">
    <property type="entry name" value="Transcription termination/antitermination protein NusA"/>
    <property type="match status" value="1"/>
</dbReference>
<dbReference type="FunFam" id="3.30.300.20:FF:000005">
    <property type="entry name" value="Transcription termination/antitermination protein NusA"/>
    <property type="match status" value="1"/>
</dbReference>
<dbReference type="Gene3D" id="3.30.300.20">
    <property type="match status" value="2"/>
</dbReference>
<dbReference type="Gene3D" id="1.10.150.20">
    <property type="entry name" value="5' to 3' exonuclease, C-terminal subdomain"/>
    <property type="match status" value="2"/>
</dbReference>
<dbReference type="Gene3D" id="2.40.50.140">
    <property type="entry name" value="Nucleic acid-binding proteins"/>
    <property type="match status" value="1"/>
</dbReference>
<dbReference type="Gene3D" id="3.30.1480.10">
    <property type="entry name" value="NusA, N-terminal domain"/>
    <property type="match status" value="1"/>
</dbReference>
<dbReference type="HAMAP" id="MF_00945_B">
    <property type="entry name" value="NusA_B"/>
    <property type="match status" value="1"/>
</dbReference>
<dbReference type="InterPro" id="IPR010995">
    <property type="entry name" value="DNA_repair_Rad51/TF_NusA_a-hlx"/>
</dbReference>
<dbReference type="InterPro" id="IPR015946">
    <property type="entry name" value="KH_dom-like_a/b"/>
</dbReference>
<dbReference type="InterPro" id="IPR025249">
    <property type="entry name" value="KH_dom_NusA-like"/>
</dbReference>
<dbReference type="InterPro" id="IPR009019">
    <property type="entry name" value="KH_sf_prok-type"/>
</dbReference>
<dbReference type="InterPro" id="IPR012340">
    <property type="entry name" value="NA-bd_OB-fold"/>
</dbReference>
<dbReference type="InterPro" id="IPR030842">
    <property type="entry name" value="NusA_bac"/>
</dbReference>
<dbReference type="InterPro" id="IPR036555">
    <property type="entry name" value="NusA_N_sf"/>
</dbReference>
<dbReference type="InterPro" id="IPR003029">
    <property type="entry name" value="S1_domain"/>
</dbReference>
<dbReference type="InterPro" id="IPR013735">
    <property type="entry name" value="TF_NusA_N"/>
</dbReference>
<dbReference type="InterPro" id="IPR010214">
    <property type="entry name" value="Tscrpt_termin_fac_NusA_C_rpt"/>
</dbReference>
<dbReference type="InterPro" id="IPR010213">
    <property type="entry name" value="Tscrpt_termination_fac_NusA"/>
</dbReference>
<dbReference type="NCBIfam" id="TIGR01953">
    <property type="entry name" value="NusA"/>
    <property type="match status" value="1"/>
</dbReference>
<dbReference type="NCBIfam" id="TIGR01954">
    <property type="entry name" value="nusA_Cterm_rpt"/>
    <property type="match status" value="2"/>
</dbReference>
<dbReference type="PANTHER" id="PTHR22648">
    <property type="entry name" value="TRANSCRIPTION TERMINATION FACTOR NUSA"/>
    <property type="match status" value="1"/>
</dbReference>
<dbReference type="PANTHER" id="PTHR22648:SF0">
    <property type="entry name" value="TRANSCRIPTION TERMINATION_ANTITERMINATION PROTEIN NUSA"/>
    <property type="match status" value="1"/>
</dbReference>
<dbReference type="Pfam" id="PF14520">
    <property type="entry name" value="HHH_5"/>
    <property type="match status" value="1"/>
</dbReference>
<dbReference type="Pfam" id="PF13184">
    <property type="entry name" value="KH_5"/>
    <property type="match status" value="1"/>
</dbReference>
<dbReference type="Pfam" id="PF08529">
    <property type="entry name" value="NusA_N"/>
    <property type="match status" value="1"/>
</dbReference>
<dbReference type="SMART" id="SM00316">
    <property type="entry name" value="S1"/>
    <property type="match status" value="1"/>
</dbReference>
<dbReference type="SUPFAM" id="SSF50249">
    <property type="entry name" value="Nucleic acid-binding proteins"/>
    <property type="match status" value="1"/>
</dbReference>
<dbReference type="SUPFAM" id="SSF54814">
    <property type="entry name" value="Prokaryotic type KH domain (KH-domain type II)"/>
    <property type="match status" value="2"/>
</dbReference>
<dbReference type="SUPFAM" id="SSF47794">
    <property type="entry name" value="Rad51 N-terminal domain-like"/>
    <property type="match status" value="2"/>
</dbReference>
<dbReference type="SUPFAM" id="SSF69705">
    <property type="entry name" value="Transcription factor NusA, N-terminal domain"/>
    <property type="match status" value="1"/>
</dbReference>
<dbReference type="PROSITE" id="PS50084">
    <property type="entry name" value="KH_TYPE_1"/>
    <property type="match status" value="1"/>
</dbReference>
<dbReference type="PROSITE" id="PS50126">
    <property type="entry name" value="S1"/>
    <property type="match status" value="1"/>
</dbReference>
<keyword id="KW-0963">Cytoplasm</keyword>
<keyword id="KW-1185">Reference proteome</keyword>
<keyword id="KW-0677">Repeat</keyword>
<keyword id="KW-0694">RNA-binding</keyword>
<keyword id="KW-0804">Transcription</keyword>
<keyword id="KW-0889">Transcription antitermination</keyword>
<keyword id="KW-0805">Transcription regulation</keyword>
<keyword id="KW-0806">Transcription termination</keyword>
<proteinExistence type="inferred from homology"/>
<organism>
    <name type="scientific">Buchnera aphidicola subsp. Acyrthosiphon pisum (strain APS)</name>
    <name type="common">Acyrthosiphon pisum symbiotic bacterium</name>
    <dbReference type="NCBI Taxonomy" id="107806"/>
    <lineage>
        <taxon>Bacteria</taxon>
        <taxon>Pseudomonadati</taxon>
        <taxon>Pseudomonadota</taxon>
        <taxon>Gammaproteobacteria</taxon>
        <taxon>Enterobacterales</taxon>
        <taxon>Erwiniaceae</taxon>
        <taxon>Buchnera</taxon>
    </lineage>
</organism>
<reference key="1">
    <citation type="journal article" date="2000" name="Nature">
        <title>Genome sequence of the endocellular bacterial symbiont of aphids Buchnera sp. APS.</title>
        <authorList>
            <person name="Shigenobu S."/>
            <person name="Watanabe H."/>
            <person name="Hattori M."/>
            <person name="Sakaki Y."/>
            <person name="Ishikawa H."/>
        </authorList>
    </citation>
    <scope>NUCLEOTIDE SEQUENCE [LARGE SCALE GENOMIC DNA]</scope>
    <source>
        <strain>APS</strain>
    </source>
</reference>
<accession>P57459</accession>
<gene>
    <name evidence="1" type="primary">nusA</name>
    <name type="ordered locus">BU378</name>
</gene>
<protein>
    <recommendedName>
        <fullName evidence="1">Transcription termination/antitermination protein NusA</fullName>
    </recommendedName>
</protein>
<name>NUSA_BUCAI</name>
<sequence length="496" mass="55995">MNKEILAVVEAVSNEKSLPREKIFEALEMALATATKKKHEQEIDIRVSINRKTGGFTTFRRWMVVETVTQPTREITLEAACFDGEKVYLNDYIEEQIESVDFDRITTQTAKQVIVQKVREAERAMLVEQFRKYTGQIITGIVKKINRDNIMLDLGNNAEALILREGMLPRENFRPGDRIRGILYGVYPEARGAQLFISRSKTEMLTELFRIEVPEIGEEVIEIKAAARDPGSRAKIAVKTNDKRIDPVGACVGMRGARVQAVSSELCGERIDIILWDDNPAQFVINAMAPADVASIVVDEDCHTMDIAVDINNLAQAIGRNGQNVRLASQISGWELNVMTTEDLHSKHKEEAHTAFNFFKKNLNINENIIKILVKEGFSSLEELAYIPFNELLEVKNLTEDQAKKVREGAKSKLLLMESDKNKMIIQERKTEKELLKINGMNAVLALQLAEKNIFTIEELADQGIDDLTDIKNLNSEQAGLLIMTARNICWFSSKV</sequence>
<evidence type="ECO:0000255" key="1">
    <source>
        <dbReference type="HAMAP-Rule" id="MF_00945"/>
    </source>
</evidence>
<feature type="chain" id="PRO_0000181962" description="Transcription termination/antitermination protein NusA">
    <location>
        <begin position="1"/>
        <end position="496"/>
    </location>
</feature>
<feature type="domain" description="S1 motif" evidence="1">
    <location>
        <begin position="135"/>
        <end position="200"/>
    </location>
</feature>
<feature type="domain" description="KH" evidence="1">
    <location>
        <begin position="302"/>
        <end position="370"/>
    </location>
</feature>
<feature type="repeat" description="1">
    <location>
        <begin position="364"/>
        <end position="414"/>
    </location>
</feature>
<feature type="repeat" description="2">
    <location>
        <begin position="440"/>
        <end position="490"/>
    </location>
</feature>
<feature type="region of interest" description="2 X 51 AA approximate repeats" evidence="1">
    <location>
        <begin position="364"/>
        <end position="490"/>
    </location>
</feature>